<evidence type="ECO:0000250" key="1"/>
<evidence type="ECO:0000255" key="2"/>
<evidence type="ECO:0000255" key="3">
    <source>
        <dbReference type="PROSITE-ProRule" id="PRU00541"/>
    </source>
</evidence>
<evidence type="ECO:0000255" key="4">
    <source>
        <dbReference type="PROSITE-ProRule" id="PRU00542"/>
    </source>
</evidence>
<evidence type="ECO:0000256" key="5">
    <source>
        <dbReference type="SAM" id="MobiDB-lite"/>
    </source>
</evidence>
<evidence type="ECO:0000305" key="6"/>
<dbReference type="EC" id="3.6.4.13"/>
<dbReference type="EMBL" id="CH408156">
    <property type="protein sequence ID" value="EDK37748.2"/>
    <property type="molecule type" value="Genomic_DNA"/>
</dbReference>
<dbReference type="RefSeq" id="XP_001486175.1">
    <property type="nucleotide sequence ID" value="XM_001486125.1"/>
</dbReference>
<dbReference type="SMR" id="A5DEZ5"/>
<dbReference type="FunCoup" id="A5DEZ5">
    <property type="interactions" value="210"/>
</dbReference>
<dbReference type="STRING" id="294746.A5DEZ5"/>
<dbReference type="GeneID" id="5127588"/>
<dbReference type="KEGG" id="pgu:PGUG_01846"/>
<dbReference type="VEuPathDB" id="FungiDB:PGUG_01846"/>
<dbReference type="eggNOG" id="KOG0342">
    <property type="taxonomic scope" value="Eukaryota"/>
</dbReference>
<dbReference type="HOGENOM" id="CLU_003041_21_0_1"/>
<dbReference type="InParanoid" id="A5DEZ5"/>
<dbReference type="OMA" id="AHEKIDQ"/>
<dbReference type="OrthoDB" id="193716at2759"/>
<dbReference type="Proteomes" id="UP000001997">
    <property type="component" value="Unassembled WGS sequence"/>
</dbReference>
<dbReference type="GO" id="GO:0005759">
    <property type="term" value="C:mitochondrial matrix"/>
    <property type="evidence" value="ECO:0007669"/>
    <property type="project" value="UniProtKB-SubCell"/>
</dbReference>
<dbReference type="GO" id="GO:0005524">
    <property type="term" value="F:ATP binding"/>
    <property type="evidence" value="ECO:0007669"/>
    <property type="project" value="UniProtKB-KW"/>
</dbReference>
<dbReference type="GO" id="GO:0016887">
    <property type="term" value="F:ATP hydrolysis activity"/>
    <property type="evidence" value="ECO:0007669"/>
    <property type="project" value="RHEA"/>
</dbReference>
<dbReference type="GO" id="GO:0003723">
    <property type="term" value="F:RNA binding"/>
    <property type="evidence" value="ECO:0007669"/>
    <property type="project" value="UniProtKB-KW"/>
</dbReference>
<dbReference type="GO" id="GO:0003724">
    <property type="term" value="F:RNA helicase activity"/>
    <property type="evidence" value="ECO:0007669"/>
    <property type="project" value="UniProtKB-EC"/>
</dbReference>
<dbReference type="GO" id="GO:0006397">
    <property type="term" value="P:mRNA processing"/>
    <property type="evidence" value="ECO:0007669"/>
    <property type="project" value="UniProtKB-KW"/>
</dbReference>
<dbReference type="GO" id="GO:0006417">
    <property type="term" value="P:regulation of translation"/>
    <property type="evidence" value="ECO:0007669"/>
    <property type="project" value="UniProtKB-KW"/>
</dbReference>
<dbReference type="GO" id="GO:0008380">
    <property type="term" value="P:RNA splicing"/>
    <property type="evidence" value="ECO:0007669"/>
    <property type="project" value="UniProtKB-KW"/>
</dbReference>
<dbReference type="CDD" id="cd17964">
    <property type="entry name" value="DEADc_MSS116"/>
    <property type="match status" value="1"/>
</dbReference>
<dbReference type="CDD" id="cd18787">
    <property type="entry name" value="SF2_C_DEAD"/>
    <property type="match status" value="1"/>
</dbReference>
<dbReference type="Gene3D" id="3.40.50.300">
    <property type="entry name" value="P-loop containing nucleotide triphosphate hydrolases"/>
    <property type="match status" value="2"/>
</dbReference>
<dbReference type="InterPro" id="IPR011545">
    <property type="entry name" value="DEAD/DEAH_box_helicase_dom"/>
</dbReference>
<dbReference type="InterPro" id="IPR014001">
    <property type="entry name" value="Helicase_ATP-bd"/>
</dbReference>
<dbReference type="InterPro" id="IPR001650">
    <property type="entry name" value="Helicase_C-like"/>
</dbReference>
<dbReference type="InterPro" id="IPR027417">
    <property type="entry name" value="P-loop_NTPase"/>
</dbReference>
<dbReference type="PANTHER" id="PTHR24031">
    <property type="entry name" value="RNA HELICASE"/>
    <property type="match status" value="1"/>
</dbReference>
<dbReference type="Pfam" id="PF00270">
    <property type="entry name" value="DEAD"/>
    <property type="match status" value="1"/>
</dbReference>
<dbReference type="Pfam" id="PF00271">
    <property type="entry name" value="Helicase_C"/>
    <property type="match status" value="1"/>
</dbReference>
<dbReference type="SMART" id="SM00487">
    <property type="entry name" value="DEXDc"/>
    <property type="match status" value="1"/>
</dbReference>
<dbReference type="SMART" id="SM00490">
    <property type="entry name" value="HELICc"/>
    <property type="match status" value="1"/>
</dbReference>
<dbReference type="SUPFAM" id="SSF52540">
    <property type="entry name" value="P-loop containing nucleoside triphosphate hydrolases"/>
    <property type="match status" value="1"/>
</dbReference>
<dbReference type="PROSITE" id="PS51192">
    <property type="entry name" value="HELICASE_ATP_BIND_1"/>
    <property type="match status" value="1"/>
</dbReference>
<dbReference type="PROSITE" id="PS51194">
    <property type="entry name" value="HELICASE_CTER"/>
    <property type="match status" value="1"/>
</dbReference>
<gene>
    <name type="primary">MSS116</name>
    <name type="ORF">PGUG_01846</name>
</gene>
<organism>
    <name type="scientific">Meyerozyma guilliermondii (strain ATCC 6260 / CBS 566 / DSM 6381 / JCM 1539 / NBRC 10279 / NRRL Y-324)</name>
    <name type="common">Yeast</name>
    <name type="synonym">Candida guilliermondii</name>
    <dbReference type="NCBI Taxonomy" id="294746"/>
    <lineage>
        <taxon>Eukaryota</taxon>
        <taxon>Fungi</taxon>
        <taxon>Dikarya</taxon>
        <taxon>Ascomycota</taxon>
        <taxon>Saccharomycotina</taxon>
        <taxon>Pichiomycetes</taxon>
        <taxon>Debaryomycetaceae</taxon>
        <taxon>Meyerozyma</taxon>
    </lineage>
</organism>
<keyword id="KW-0067">ATP-binding</keyword>
<keyword id="KW-0347">Helicase</keyword>
<keyword id="KW-0378">Hydrolase</keyword>
<keyword id="KW-0496">Mitochondrion</keyword>
<keyword id="KW-0507">mRNA processing</keyword>
<keyword id="KW-0508">mRNA splicing</keyword>
<keyword id="KW-0547">Nucleotide-binding</keyword>
<keyword id="KW-1185">Reference proteome</keyword>
<keyword id="KW-0694">RNA-binding</keyword>
<keyword id="KW-0809">Transit peptide</keyword>
<keyword id="KW-0810">Translation regulation</keyword>
<comment type="function">
    <text evidence="1">ATP-dependent RNA helicase required for mitochondrial splicing of group I and II introns. Also required for efficient mitochondrial translation (By similarity).</text>
</comment>
<comment type="catalytic activity">
    <reaction>
        <text>ATP + H2O = ADP + phosphate + H(+)</text>
        <dbReference type="Rhea" id="RHEA:13065"/>
        <dbReference type="ChEBI" id="CHEBI:15377"/>
        <dbReference type="ChEBI" id="CHEBI:15378"/>
        <dbReference type="ChEBI" id="CHEBI:30616"/>
        <dbReference type="ChEBI" id="CHEBI:43474"/>
        <dbReference type="ChEBI" id="CHEBI:456216"/>
        <dbReference type="EC" id="3.6.4.13"/>
    </reaction>
</comment>
<comment type="subcellular location">
    <subcellularLocation>
        <location evidence="1">Mitochondrion matrix</location>
    </subcellularLocation>
</comment>
<comment type="domain">
    <text>The Q motif is unique to and characteristic of the DEAD box family of RNA helicases and controls ATP binding and hydrolysis.</text>
</comment>
<comment type="similarity">
    <text evidence="6">Belongs to the DEAD box helicase family. DDX18/HAS1 subfamily.</text>
</comment>
<protein>
    <recommendedName>
        <fullName>ATP-dependent RNA helicase MSS116, mitochondrial</fullName>
        <ecNumber>3.6.4.13</ecNumber>
    </recommendedName>
</protein>
<sequence>MSWVRSVAIRTALCRQVRSRYQSYGSTRLFSSSLRSWEEPEVVTKTPKADIDHEAVKAHQESSPLKSIEVPFTSLEASRKFDKSIFRGLYNSKMKNMTVVQQRAIMPMMDTKTGVVVRAKTGTGKTLAFALPCIQAALENPQQTQKGRIQALVVAPTRDLALQIEAEFKKVLQHQTRNVHRKTDTFVLIGGRKNDLHPKAKAAIVIATPGRLEAILRDPRMLPMFSDLKYRVYDEADRLLDQGFAPTLEVIEERLRDAKAEALEPDNHFKTALFSATVDDAVTNFAHETIGKEYEYINCVDKDAEESHENIHQGIVRTQSIKDSFEASFSYILNHINDKYFKAIVFLPTITGTEYYYRVLQRAKREELYDSETATKKYGSRILRLHGKMSQSARDRTVKEFRRTSHGVLVCTDVAARGLDFNDVSHVIQMCPSSSVADYIHKIGRTARAGARGKARIFISEPEMKFIETLQRERGIVFKEDTEYVKDETSPDHFQRLGSYEQDALEEFLRTFLGFAASVSGVYRFNKQRIVEESFALYRHILNDPSAKLSVGRRFVSEVLRMPGRDAAEFFDVPGGFDMRSSNDRKSKRTFMGDGGSRSDRGFSNDRYGNSGRSYNKSRSFDRNDRSYGNDRSYSNDRKSYGNKSYGDKSYGNKAYGDKSYGDKSYGDKSYGKSYGNRSNDRSFSRGNDRGGYEKRNYGSQSRNTYGRRDDSDE</sequence>
<accession>A5DEZ5</accession>
<name>MS116_PICGU</name>
<proteinExistence type="inferred from homology"/>
<feature type="transit peptide" description="Mitochondrion" evidence="2">
    <location>
        <begin position="1"/>
        <end position="37"/>
    </location>
</feature>
<feature type="chain" id="PRO_0000294630" description="ATP-dependent RNA helicase MSS116, mitochondrial">
    <location>
        <begin position="38"/>
        <end position="714"/>
    </location>
</feature>
<feature type="domain" description="Helicase ATP-binding" evidence="3">
    <location>
        <begin position="106"/>
        <end position="296"/>
    </location>
</feature>
<feature type="domain" description="Helicase C-terminal" evidence="4">
    <location>
        <begin position="335"/>
        <end position="498"/>
    </location>
</feature>
<feature type="region of interest" description="Disordered" evidence="5">
    <location>
        <begin position="581"/>
        <end position="714"/>
    </location>
</feature>
<feature type="short sequence motif" description="Q motif">
    <location>
        <begin position="74"/>
        <end position="102"/>
    </location>
</feature>
<feature type="short sequence motif" description="DEAD box">
    <location>
        <begin position="234"/>
        <end position="237"/>
    </location>
</feature>
<feature type="compositionally biased region" description="Basic and acidic residues" evidence="5">
    <location>
        <begin position="619"/>
        <end position="640"/>
    </location>
</feature>
<feature type="compositionally biased region" description="Basic and acidic residues" evidence="5">
    <location>
        <begin position="656"/>
        <end position="671"/>
    </location>
</feature>
<feature type="compositionally biased region" description="Basic and acidic residues" evidence="5">
    <location>
        <begin position="679"/>
        <end position="697"/>
    </location>
</feature>
<feature type="binding site" evidence="3">
    <location>
        <begin position="119"/>
        <end position="126"/>
    </location>
    <ligand>
        <name>ATP</name>
        <dbReference type="ChEBI" id="CHEBI:30616"/>
    </ligand>
</feature>
<reference key="1">
    <citation type="journal article" date="2009" name="Nature">
        <title>Evolution of pathogenicity and sexual reproduction in eight Candida genomes.</title>
        <authorList>
            <person name="Butler G."/>
            <person name="Rasmussen M.D."/>
            <person name="Lin M.F."/>
            <person name="Santos M.A.S."/>
            <person name="Sakthikumar S."/>
            <person name="Munro C.A."/>
            <person name="Rheinbay E."/>
            <person name="Grabherr M."/>
            <person name="Forche A."/>
            <person name="Reedy J.L."/>
            <person name="Agrafioti I."/>
            <person name="Arnaud M.B."/>
            <person name="Bates S."/>
            <person name="Brown A.J.P."/>
            <person name="Brunke S."/>
            <person name="Costanzo M.C."/>
            <person name="Fitzpatrick D.A."/>
            <person name="de Groot P.W.J."/>
            <person name="Harris D."/>
            <person name="Hoyer L.L."/>
            <person name="Hube B."/>
            <person name="Klis F.M."/>
            <person name="Kodira C."/>
            <person name="Lennard N."/>
            <person name="Logue M.E."/>
            <person name="Martin R."/>
            <person name="Neiman A.M."/>
            <person name="Nikolaou E."/>
            <person name="Quail M.A."/>
            <person name="Quinn J."/>
            <person name="Santos M.C."/>
            <person name="Schmitzberger F.F."/>
            <person name="Sherlock G."/>
            <person name="Shah P."/>
            <person name="Silverstein K.A.T."/>
            <person name="Skrzypek M.S."/>
            <person name="Soll D."/>
            <person name="Staggs R."/>
            <person name="Stansfield I."/>
            <person name="Stumpf M.P.H."/>
            <person name="Sudbery P.E."/>
            <person name="Srikantha T."/>
            <person name="Zeng Q."/>
            <person name="Berman J."/>
            <person name="Berriman M."/>
            <person name="Heitman J."/>
            <person name="Gow N.A.R."/>
            <person name="Lorenz M.C."/>
            <person name="Birren B.W."/>
            <person name="Kellis M."/>
            <person name="Cuomo C.A."/>
        </authorList>
    </citation>
    <scope>NUCLEOTIDE SEQUENCE [LARGE SCALE GENOMIC DNA]</scope>
    <source>
        <strain>ATCC 6260 / CBS 566 / DSM 6381 / JCM 1539 / NBRC 10279 / NRRL Y-324</strain>
    </source>
</reference>